<protein>
    <recommendedName>
        <fullName evidence="11">Fibritin</fullName>
    </recommendedName>
    <alternativeName>
        <fullName>Collar protein</fullName>
    </alternativeName>
    <alternativeName>
        <fullName evidence="10">Whisker antigen control protein</fullName>
    </alternativeName>
</protein>
<name>WAC_BPT4</name>
<organism>
    <name type="scientific">Enterobacteria phage T4</name>
    <name type="common">Bacteriophage T4</name>
    <dbReference type="NCBI Taxonomy" id="10665"/>
    <lineage>
        <taxon>Viruses</taxon>
        <taxon>Duplodnaviria</taxon>
        <taxon>Heunggongvirae</taxon>
        <taxon>Uroviricota</taxon>
        <taxon>Caudoviricetes</taxon>
        <taxon>Straboviridae</taxon>
        <taxon>Tevenvirinae</taxon>
        <taxon>Tequatrovirus</taxon>
    </lineage>
</organism>
<comment type="function">
    <text evidence="3 6 8">Chaperone involved in tail fiber assembly and retraction. Acts as a chaperone helping to attach the long tail fibers to the virus during the assembly process. During phage assembly, twelve fibritin molecules attach to the phage neck via gp13: six molecules forming the collar and six molecules forming the whiskers.</text>
</comment>
<comment type="subunit">
    <text evidence="2 5 6 9">Homotrimer (PubMed:15033360, PubMed:19361528, PubMed:9261070). Interacts (via N-terminal domain) with neck protein gp13; this interaction allows attachment of the fibrous collar and wiskers (PubMed:23434847).</text>
</comment>
<comment type="subcellular location">
    <subcellularLocation>
        <location evidence="6">Virion</location>
    </subcellularLocation>
    <text evidence="6">Localizes to the neck.</text>
</comment>
<comment type="domain">
    <text>The central domain consists of 12 alpha-helical domains (19-40 residues long) with coiled-coil structural patterns.</text>
</comment>
<comment type="PTM">
    <text evidence="7">Cross-linked via an isopeptide bond to E.coli host protein DncV during infection (PubMed:36848932).</text>
</comment>
<keyword id="KW-0002">3D-structure</keyword>
<keyword id="KW-0143">Chaperone</keyword>
<keyword id="KW-0175">Coiled coil</keyword>
<keyword id="KW-1017">Isopeptide bond</keyword>
<keyword id="KW-0426">Late protein</keyword>
<keyword id="KW-1185">Reference proteome</keyword>
<keyword id="KW-0946">Virion</keyword>
<evidence type="ECO:0000255" key="1"/>
<evidence type="ECO:0000269" key="2">
    <source>
    </source>
</evidence>
<evidence type="ECO:0000269" key="3">
    <source>
    </source>
</evidence>
<evidence type="ECO:0000269" key="4">
    <source>
    </source>
</evidence>
<evidence type="ECO:0000269" key="5">
    <source>
    </source>
</evidence>
<evidence type="ECO:0000269" key="6">
    <source>
    </source>
</evidence>
<evidence type="ECO:0000269" key="7">
    <source>
    </source>
</evidence>
<evidence type="ECO:0000269" key="8">
    <source>
    </source>
</evidence>
<evidence type="ECO:0000269" key="9">
    <source>
    </source>
</evidence>
<evidence type="ECO:0000303" key="10">
    <source>
    </source>
</evidence>
<evidence type="ECO:0000303" key="11">
    <source>
    </source>
</evidence>
<evidence type="ECO:0000305" key="12"/>
<evidence type="ECO:0007744" key="13">
    <source>
        <dbReference type="PDB" id="1AVY"/>
    </source>
</evidence>
<evidence type="ECO:0007744" key="14">
    <source>
        <dbReference type="PDB" id="1OX3"/>
    </source>
</evidence>
<evidence type="ECO:0007744" key="15">
    <source>
        <dbReference type="PDB" id="1RFO"/>
    </source>
</evidence>
<evidence type="ECO:0007744" key="16">
    <source>
        <dbReference type="PDB" id="2BSG"/>
    </source>
</evidence>
<evidence type="ECO:0007744" key="17">
    <source>
        <dbReference type="PDB" id="2KBL"/>
    </source>
</evidence>
<evidence type="ECO:0007744" key="18">
    <source>
        <dbReference type="PDB" id="3J2O"/>
    </source>
</evidence>
<evidence type="ECO:0007744" key="19">
    <source>
        <dbReference type="PDB" id="4NCU"/>
    </source>
</evidence>
<evidence type="ECO:0007744" key="20">
    <source>
        <dbReference type="PDB" id="4NCV"/>
    </source>
</evidence>
<evidence type="ECO:0007744" key="21">
    <source>
        <dbReference type="PDB" id="4NCW"/>
    </source>
</evidence>
<evidence type="ECO:0007829" key="22">
    <source>
        <dbReference type="PDB" id="1AA0"/>
    </source>
</evidence>
<evidence type="ECO:0007829" key="23">
    <source>
        <dbReference type="PDB" id="1AVY"/>
    </source>
</evidence>
<evidence type="ECO:0007829" key="24">
    <source>
        <dbReference type="PDB" id="1OX3"/>
    </source>
</evidence>
<evidence type="ECO:0007829" key="25">
    <source>
        <dbReference type="PDB" id="4MMV"/>
    </source>
</evidence>
<evidence type="ECO:0007829" key="26">
    <source>
        <dbReference type="PDB" id="4NCU"/>
    </source>
</evidence>
<reference key="1">
    <citation type="journal article" date="1988" name="Nucleic Acids Res.">
        <title>Nucleotide and deduced amino acid sequence of bacteriophage T4 gene wac.</title>
        <authorList>
            <person name="Prilipov A.G."/>
            <person name="Selivanov N.A."/>
            <person name="Nikolaeva L.I."/>
            <person name="Mesyanzhinov V.V."/>
        </authorList>
    </citation>
    <scope>NUCLEOTIDE SEQUENCE [GENOMIC DNA]</scope>
    <source>
        <strain>D</strain>
    </source>
</reference>
<reference key="2">
    <citation type="journal article" date="1994" name="J. Mol. Biol.">
        <title>Fibritin encoded by bacteriophage T4 gene wac has a parallel triple-stranded alpha-helical coiled-coil structure.</title>
        <authorList>
            <person name="Efimov V.P."/>
            <person name="Nepluev I.V."/>
            <person name="Sobolev B.N."/>
            <person name="Zurabishvili T.G."/>
            <person name="Schulthess T."/>
            <person name="Lustig A."/>
            <person name="Engel J."/>
            <person name="Haener M."/>
            <person name="Aebi U."/>
            <person name="Venyaminov S.Y."/>
            <person name="Potekhin S.A."/>
            <person name="Mesyanzhinov V.V."/>
        </authorList>
    </citation>
    <scope>NUCLEOTIDE SEQUENCE [GENOMIC DNA]</scope>
    <source>
        <strain>D</strain>
    </source>
</reference>
<reference key="3">
    <citation type="submission" date="1997-05" db="EMBL/GenBank/DDBJ databases">
        <authorList>
            <person name="Mesyanzhinov V.V."/>
        </authorList>
    </citation>
    <scope>SEQUENCE REVISION TO 358 AND 479</scope>
    <source>
        <strain>D</strain>
    </source>
</reference>
<reference key="4">
    <citation type="journal article" date="2003" name="Microbiol. Mol. Biol. Rev.">
        <title>Bacteriophage T4 genome.</title>
        <authorList>
            <person name="Miller E.S."/>
            <person name="Kutter E."/>
            <person name="Mosig G."/>
            <person name="Arisaka F."/>
            <person name="Kunisawa T."/>
            <person name="Ruger W."/>
        </authorList>
    </citation>
    <scope>NUCLEOTIDE SEQUENCE [LARGE SCALE GENOMIC DNA]</scope>
</reference>
<reference key="5">
    <citation type="journal article" date="1989" name="Nucleic Acids Res.">
        <title>Nucleotide sequences of bacteriophage T4 genes 13, 14 and 15.</title>
        <authorList>
            <person name="Selivanov N.A."/>
            <person name="Prilipov A.G."/>
            <person name="Mesyanzhinov V.V."/>
        </authorList>
    </citation>
    <scope>NUCLEOTIDE SEQUENCE [GENOMIC DNA] OF 480-487</scope>
    <source>
        <strain>D</strain>
    </source>
</reference>
<reference key="6">
    <citation type="journal article" date="1988" name="Nucleic Acids Res.">
        <title>Nucleotide and deduced amino acid sequence of bacteriophage T4 gene 12.</title>
        <authorList>
            <person name="Selivanov N.A."/>
            <person name="Prilipov A.G."/>
            <person name="Mesyanzhinov V.V."/>
        </authorList>
    </citation>
    <scope>NUCLEOTIDE SEQUENCE [GENOMIC DNA] OF 1-14</scope>
    <source>
        <strain>D</strain>
    </source>
</reference>
<reference key="7">
    <citation type="journal article" date="1979" name="J. Mol. Biol.">
        <title>The role of the collar/whisker complex in bacteriophage T4D tail fiber attachment.</title>
        <authorList>
            <person name="Terzaghi B.E."/>
            <person name="Terzaghi E."/>
            <person name="Coombs D."/>
        </authorList>
    </citation>
    <scope>FUNCTION</scope>
</reference>
<reference key="8">
    <citation type="journal article" date="1991" name="J. Biomol. Struct. Dyn.">
        <title>The wac gene product of bacteriophage T4 contains coiled-coil structural patterns.</title>
        <authorList>
            <person name="Sobolev B.N."/>
            <person name="Mesyanzhinov V.V."/>
        </authorList>
    </citation>
    <scope>TOPOLOGY</scope>
    <scope>COILED COIL</scope>
</reference>
<reference key="9">
    <citation type="journal article" date="2005" name="J. Bacteriol.">
        <title>gpwac of the T4-type bacteriophages: structure, function, and evolution of a segmented coiled-coil protein that controls viral infectivity.</title>
        <authorList>
            <person name="Letarov A."/>
            <person name="Manival X."/>
            <person name="Desplats C."/>
            <person name="Krisch H.M."/>
        </authorList>
    </citation>
    <scope>FUNCTION</scope>
    <scope>COILED COIL</scope>
</reference>
<reference key="10">
    <citation type="journal article" date="2023" name="Nature">
        <title>Ubiquitin-like conjugation by bacterial cGAS enhances anti-phage defence.</title>
        <authorList>
            <person name="Jenson J.M."/>
            <person name="Li T."/>
            <person name="Du F."/>
            <person name="Ea C.K."/>
            <person name="Chen Z.J."/>
        </authorList>
    </citation>
    <scope>CROSS-LINK TO HOST DNCV</scope>
</reference>
<reference key="11">
    <citation type="journal article" date="1997" name="Structure">
        <title>Structure of bacteriophage T4 fibritin: a segmented coiled coil and the role of the C-terminal domain.</title>
        <authorList>
            <person name="Tao Y."/>
            <person name="Strelkov S.V."/>
            <person name="Mesyanzhinov V.V."/>
            <person name="Rossmann M.G."/>
        </authorList>
    </citation>
    <scope>X-RAY CRYSTALLOGRAPHY (2.2 ANGSTROMS) OF 369-487</scope>
    <scope>COILED COIL</scope>
    <scope>SUBUNIT</scope>
</reference>
<reference evidence="13" key="12">
    <citation type="journal article" date="1998" name="Acta Crystallogr. D">
        <title>Structure of bacteriophage T4 fibritin M: a troublesome packing arrangement.</title>
        <authorList>
            <person name="Strelkov S.V."/>
            <person name="Tao Y."/>
            <person name="Shneider M.M."/>
            <person name="Mesyanzhinov V.V."/>
            <person name="Rossmann M.G."/>
        </authorList>
    </citation>
    <scope>X-RAY CRYSTALLOGRAPHY (1.85 ANGSTROMS) OF 414-487</scope>
</reference>
<reference evidence="15" key="13">
    <citation type="journal article" date="2004" name="J. Mol. Biol.">
        <title>Very fast folding and association of a trimerization domain from bacteriophage T4 fibritin.</title>
        <authorList>
            <person name="Guthe S."/>
            <person name="Kapinos L."/>
            <person name="Moglich A."/>
            <person name="Meier S."/>
            <person name="Grzesiek S."/>
            <person name="Kiefhaber T."/>
        </authorList>
    </citation>
    <scope>STRUCTURE BY NMR OF 458-484</scope>
    <scope>SUBUNIT</scope>
</reference>
<reference evidence="14" key="14">
    <citation type="journal article" date="2004" name="J. Mol. Biol.">
        <title>Design and crystal structure of bacteriophage T4 mini-fibritin NCCF.</title>
        <authorList>
            <person name="Boudko S.P."/>
            <person name="Strelkov S.V."/>
            <person name="Engel J."/>
            <person name="Stetefeld J."/>
        </authorList>
    </citation>
    <scope>X-RAY CRYSTALLOGRAPHY (2.00 ANGSTROMS) OF 2-81</scope>
</reference>
<reference evidence="16" key="15">
    <citation type="journal article" date="2005" name="Nat. Struct. Mol. Biol.">
        <title>The tail structure of bacteriophage T4 and its mechanism of contraction.</title>
        <authorList>
            <person name="Kostyuchenko V.A."/>
            <person name="Chipman P.R."/>
            <person name="Leiman P.G."/>
            <person name="Arisaka F."/>
            <person name="Mesyanzhinov V.V."/>
            <person name="Rossmann M.G."/>
        </authorList>
    </citation>
    <scope>STRUCTURE BY ELECTRON MICROSCOPY (15.00 ANGSTROMS)</scope>
</reference>
<reference evidence="17" key="16">
    <citation type="journal article" date="2009" name="J. Mol. Biol.">
        <title>NMR structure of a monomeric intermediate on the evolutionarily optimized assembly pathway of a small trimerization domain.</title>
        <authorList>
            <person name="Habazettl J."/>
            <person name="Reiner A."/>
            <person name="Kiefhaber T."/>
        </authorList>
    </citation>
    <scope>STRUCTURE BY NMR OF 458-484</scope>
    <scope>SUBUNIT</scope>
</reference>
<reference evidence="18" key="17">
    <citation type="journal article" date="2013" name="J. Mol. Biol.">
        <title>The molecular architecture of the bacteriophage T4 neck.</title>
        <authorList>
            <person name="Fokine A."/>
            <person name="Zhang Z."/>
            <person name="Kanamaru S."/>
            <person name="Bowman V.D."/>
            <person name="Aksyuk A.A."/>
            <person name="Arisaka F."/>
            <person name="Rao V.B."/>
            <person name="Rossmann M.G."/>
        </authorList>
    </citation>
    <scope>STRUCTURE BY ELECTRON MICROSCOPY (25.00 ANGSTROMS) OF 2-487</scope>
    <scope>INTERACTION WITH GP13</scope>
    <scope>FUNCTION</scope>
    <scope>SUBCELLULAR LOCATION</scope>
</reference>
<reference evidence="19 20 21" key="18">
    <citation type="journal article" date="2014" name="Org. Biomol. Chem.">
        <title>Versatile C(3)-symmetric scaffolds and their use for covalent stabilization of the foldon trimer.</title>
        <authorList>
            <person name="Berthelmann A."/>
            <person name="Lach J."/>
            <person name="Grawert M.A."/>
            <person name="Groll M."/>
            <person name="Eichler J."/>
        </authorList>
    </citation>
    <scope>X-RAY CRYSTALLOGRAPHY (1.20 ANGSTROMS) OF 458-484</scope>
</reference>
<feature type="initiator methionine" description="Removed; by host">
    <location>
        <position position="1"/>
    </location>
</feature>
<feature type="chain" id="PRO_0000165075" description="Fibritin">
    <location>
        <begin position="2"/>
        <end position="487"/>
    </location>
</feature>
<feature type="coiled-coil region" evidence="3 4">
    <location>
        <begin position="52"/>
        <end position="84"/>
    </location>
</feature>
<feature type="coiled-coil region" evidence="3 4">
    <location>
        <begin position="99"/>
        <end position="131"/>
    </location>
</feature>
<feature type="coiled-coil region" evidence="3 4">
    <location>
        <begin position="145"/>
        <end position="156"/>
    </location>
</feature>
<feature type="coiled-coil region" evidence="3 4">
    <location>
        <begin position="177"/>
        <end position="195"/>
    </location>
</feature>
<feature type="coiled-coil region" evidence="3 4">
    <location>
        <begin position="210"/>
        <end position="221"/>
    </location>
</feature>
<feature type="coiled-coil region" evidence="3 4">
    <location>
        <begin position="232"/>
        <end position="257"/>
    </location>
</feature>
<feature type="coiled-coil region" evidence="3 4">
    <location>
        <begin position="265"/>
        <end position="284"/>
    </location>
</feature>
<feature type="coiled-coil region" evidence="3 4">
    <location>
        <begin position="289"/>
        <end position="300"/>
    </location>
</feature>
<feature type="coiled-coil region" evidence="3 4">
    <location>
        <begin position="309"/>
        <end position="327"/>
    </location>
</feature>
<feature type="coiled-coil region" evidence="3 4">
    <location>
        <begin position="335"/>
        <end position="346"/>
    </location>
</feature>
<feature type="coiled-coil region" evidence="3 4">
    <location>
        <begin position="361"/>
        <end position="386"/>
    </location>
</feature>
<feature type="coiled-coil region" evidence="3 4">
    <location>
        <begin position="393"/>
        <end position="404"/>
    </location>
</feature>
<feature type="coiled-coil region" evidence="1 3 4">
    <location>
        <begin position="419"/>
        <end position="454"/>
    </location>
</feature>
<feature type="cross-link" description="Glycyl lysine isopeptide (Lys-Gly) (interchain with G-Cter in host protein DncV)" evidence="7">
    <location>
        <position position="100"/>
    </location>
</feature>
<feature type="sequence conflict" description="In Ref. 4; CAA31379." evidence="12" ref="4">
    <original>P</original>
    <variation>H</variation>
    <location>
        <position position="358"/>
    </location>
</feature>
<feature type="sequence conflict" description="In Ref. 4; CAA31379." evidence="12" ref="4">
    <original>F</original>
    <variation>L</variation>
    <location>
        <position position="479"/>
    </location>
</feature>
<feature type="sequence conflict" description="In Ref. 1." evidence="12" ref="1">
    <original>S</original>
    <variation>P</variation>
    <location>
        <position position="481"/>
    </location>
</feature>
<feature type="strand" evidence="24">
    <location>
        <begin position="10"/>
        <end position="15"/>
    </location>
</feature>
<feature type="strand" evidence="24">
    <location>
        <begin position="36"/>
        <end position="39"/>
    </location>
</feature>
<feature type="turn" evidence="24">
    <location>
        <begin position="44"/>
        <end position="46"/>
    </location>
</feature>
<feature type="helix" evidence="24">
    <location>
        <begin position="47"/>
        <end position="81"/>
    </location>
</feature>
<feature type="helix" evidence="22">
    <location>
        <begin position="373"/>
        <end position="386"/>
    </location>
</feature>
<feature type="strand" evidence="22">
    <location>
        <begin position="389"/>
        <end position="392"/>
    </location>
</feature>
<feature type="helix" evidence="22">
    <location>
        <begin position="393"/>
        <end position="405"/>
    </location>
</feature>
<feature type="helix" evidence="22">
    <location>
        <begin position="414"/>
        <end position="417"/>
    </location>
</feature>
<feature type="helix" evidence="23">
    <location>
        <begin position="422"/>
        <end position="456"/>
    </location>
</feature>
<feature type="strand" evidence="25">
    <location>
        <begin position="465"/>
        <end position="467"/>
    </location>
</feature>
<feature type="strand" evidence="26">
    <location>
        <begin position="470"/>
        <end position="473"/>
    </location>
</feature>
<feature type="strand" evidence="26">
    <location>
        <begin position="476"/>
        <end position="479"/>
    </location>
</feature>
<feature type="helix" evidence="26">
    <location>
        <begin position="480"/>
        <end position="483"/>
    </location>
</feature>
<accession>P10104</accession>
<accession>O10628</accession>
<accession>Q9T0U8</accession>
<proteinExistence type="evidence at protein level"/>
<organismHost>
    <name type="scientific">Escherichia coli</name>
    <dbReference type="NCBI Taxonomy" id="562"/>
</organismHost>
<gene>
    <name evidence="10" type="primary">wac</name>
</gene>
<dbReference type="EMBL" id="X12888">
    <property type="protein sequence ID" value="CAA31379.1"/>
    <property type="molecule type" value="Genomic_DNA"/>
</dbReference>
<dbReference type="EMBL" id="AF158101">
    <property type="protein sequence ID" value="AAD42679.1"/>
    <property type="molecule type" value="Genomic_DNA"/>
</dbReference>
<dbReference type="EMBL" id="X14868">
    <property type="protein sequence ID" value="CAA33006.1"/>
    <property type="molecule type" value="Genomic_DNA"/>
</dbReference>
<dbReference type="EMBL" id="X06792">
    <property type="protein sequence ID" value="CAA29952.1"/>
    <property type="molecule type" value="Genomic_DNA"/>
</dbReference>
<dbReference type="PIR" id="S01917">
    <property type="entry name" value="FIBPT4"/>
</dbReference>
<dbReference type="RefSeq" id="NP_049771.1">
    <property type="nucleotide sequence ID" value="NC_000866.4"/>
</dbReference>
<dbReference type="PDB" id="1AA0">
    <property type="method" value="X-ray"/>
    <property type="resolution" value="2.20 A"/>
    <property type="chains" value="A=372-484"/>
</dbReference>
<dbReference type="PDB" id="1AVY">
    <property type="method" value="X-ray"/>
    <property type="resolution" value="1.85 A"/>
    <property type="chains" value="A/B/C=414-487"/>
</dbReference>
<dbReference type="PDB" id="1OX3">
    <property type="method" value="X-ray"/>
    <property type="resolution" value="2.00 A"/>
    <property type="chains" value="A=2-81"/>
</dbReference>
<dbReference type="PDB" id="1RFO">
    <property type="method" value="NMR"/>
    <property type="chains" value="A/B/C=458-484"/>
</dbReference>
<dbReference type="PDB" id="1V1H">
    <property type="method" value="X-ray"/>
    <property type="resolution" value="1.90 A"/>
    <property type="chains" value="A/B/C/D/E/F=456-484"/>
</dbReference>
<dbReference type="PDB" id="1V1I">
    <property type="method" value="X-ray"/>
    <property type="resolution" value="1.90 A"/>
    <property type="chains" value="A/B/C=456-484"/>
</dbReference>
<dbReference type="PDB" id="2BSG">
    <property type="method" value="EM"/>
    <property type="resolution" value="15.00 A"/>
    <property type="chains" value="A/B/C=1-487"/>
</dbReference>
<dbReference type="PDB" id="2IBL">
    <property type="method" value="X-ray"/>
    <property type="resolution" value="1.32 A"/>
    <property type="chains" value="A=2-81"/>
</dbReference>
<dbReference type="PDB" id="2KBL">
    <property type="method" value="NMR"/>
    <property type="chains" value="A=458-484"/>
</dbReference>
<dbReference type="PDB" id="3A1M">
    <property type="method" value="X-ray"/>
    <property type="resolution" value="2.00 A"/>
    <property type="chains" value="A/B/C/D/E/F=458-484"/>
</dbReference>
<dbReference type="PDB" id="3J2O">
    <property type="method" value="EM"/>
    <property type="resolution" value="25.00 A"/>
    <property type="chains" value="A/B/C/D/E/F=2-487"/>
</dbReference>
<dbReference type="PDB" id="4MMQ">
    <property type="method" value="X-ray"/>
    <property type="resolution" value="3.25 A"/>
    <property type="chains" value="B=458-484"/>
</dbReference>
<dbReference type="PDB" id="4MMR">
    <property type="method" value="X-ray"/>
    <property type="resolution" value="3.10 A"/>
    <property type="chains" value="B=458-484"/>
</dbReference>
<dbReference type="PDB" id="4MMS">
    <property type="method" value="X-ray"/>
    <property type="resolution" value="2.40 A"/>
    <property type="chains" value="B/D/F=458-484"/>
</dbReference>
<dbReference type="PDB" id="4MMT">
    <property type="method" value="X-ray"/>
    <property type="resolution" value="3.05 A"/>
    <property type="chains" value="B=458-484"/>
</dbReference>
<dbReference type="PDB" id="4MMU">
    <property type="method" value="X-ray"/>
    <property type="resolution" value="3.00 A"/>
    <property type="chains" value="B=458-484"/>
</dbReference>
<dbReference type="PDB" id="4MMV">
    <property type="method" value="X-ray"/>
    <property type="resolution" value="2.81 A"/>
    <property type="chains" value="B=458-484"/>
</dbReference>
<dbReference type="PDB" id="4NCU">
    <property type="method" value="X-ray"/>
    <property type="resolution" value="1.11 A"/>
    <property type="chains" value="A=458-484"/>
</dbReference>
<dbReference type="PDB" id="4NCV">
    <property type="method" value="X-ray"/>
    <property type="resolution" value="1.20 A"/>
    <property type="chains" value="A/B/C=458-484"/>
</dbReference>
<dbReference type="PDB" id="4NCW">
    <property type="method" value="X-ray"/>
    <property type="resolution" value="1.30 A"/>
    <property type="chains" value="A/B/C=458-484"/>
</dbReference>
<dbReference type="PDB" id="5TDL">
    <property type="method" value="X-ray"/>
    <property type="resolution" value="3.50 A"/>
    <property type="chains" value="A=458-484"/>
</dbReference>
<dbReference type="PDB" id="6APD">
    <property type="method" value="X-ray"/>
    <property type="resolution" value="4.10 A"/>
    <property type="chains" value="A/B/C=458-484"/>
</dbReference>
<dbReference type="PDB" id="6CNV">
    <property type="method" value="X-ray"/>
    <property type="resolution" value="4.10 A"/>
    <property type="chains" value="B=458-484"/>
</dbReference>
<dbReference type="PDB" id="6CRV">
    <property type="method" value="EM"/>
    <property type="resolution" value="3.20 A"/>
    <property type="chains" value="A/B/C=458-484"/>
</dbReference>
<dbReference type="PDB" id="6CRW">
    <property type="method" value="EM"/>
    <property type="resolution" value="3.90 A"/>
    <property type="chains" value="A/B/C=458-484"/>
</dbReference>
<dbReference type="PDB" id="6CRX">
    <property type="method" value="EM"/>
    <property type="resolution" value="3.90 A"/>
    <property type="chains" value="A/B/C=458-484"/>
</dbReference>
<dbReference type="PDB" id="6CRZ">
    <property type="method" value="EM"/>
    <property type="resolution" value="3.30 A"/>
    <property type="chains" value="A/B/C=458-484"/>
</dbReference>
<dbReference type="PDB" id="6CS0">
    <property type="method" value="EM"/>
    <property type="resolution" value="3.80 A"/>
    <property type="chains" value="A/B/C=458-484"/>
</dbReference>
<dbReference type="PDB" id="6CS1">
    <property type="method" value="EM"/>
    <property type="resolution" value="4.60 A"/>
    <property type="chains" value="A/B/C=458-484"/>
</dbReference>
<dbReference type="PDB" id="6CS2">
    <property type="method" value="EM"/>
    <property type="resolution" value="4.40 A"/>
    <property type="chains" value="A/B/C=458-484"/>
</dbReference>
<dbReference type="PDB" id="6JX7">
    <property type="method" value="EM"/>
    <property type="resolution" value="3.31 A"/>
    <property type="chains" value="A/B/C=455-484"/>
</dbReference>
<dbReference type="PDB" id="6OE5">
    <property type="method" value="X-ray"/>
    <property type="resolution" value="4.10 A"/>
    <property type="chains" value="A=458-484"/>
</dbReference>
<dbReference type="PDB" id="6Z97">
    <property type="method" value="EM"/>
    <property type="resolution" value="3.40 A"/>
    <property type="chains" value="A/B/C=458-484"/>
</dbReference>
<dbReference type="PDB" id="6ZGH">
    <property type="method" value="EM"/>
    <property type="resolution" value="6.80 A"/>
    <property type="chains" value="A/B/C=459-478"/>
</dbReference>
<dbReference type="PDB" id="6ZHD">
    <property type="method" value="EM"/>
    <property type="resolution" value="3.70 A"/>
    <property type="chains" value="A/B/C=458-484"/>
</dbReference>
<dbReference type="PDB" id="7A4N">
    <property type="method" value="EM"/>
    <property type="resolution" value="2.75 A"/>
    <property type="chains" value="A/B/C=458-484"/>
</dbReference>
<dbReference type="PDB" id="7L7F">
    <property type="method" value="EM"/>
    <property type="resolution" value="3.24 A"/>
    <property type="chains" value="E/F=458-484"/>
</dbReference>
<dbReference type="PDB" id="7NS6">
    <property type="method" value="EM"/>
    <property type="resolution" value="3.18 A"/>
    <property type="chains" value="I/J/K/L/M/N=458-484"/>
</dbReference>
<dbReference type="PDB" id="7QDG">
    <property type="method" value="EM"/>
    <property type="resolution" value="3.40 A"/>
    <property type="chains" value="A/B/C=459-486"/>
</dbReference>
<dbReference type="PDB" id="7QDH">
    <property type="method" value="EM"/>
    <property type="resolution" value="4.20 A"/>
    <property type="chains" value="A/B/C=459-486"/>
</dbReference>
<dbReference type="PDB" id="7QUR">
    <property type="method" value="EM"/>
    <property type="resolution" value="2.27 A"/>
    <property type="chains" value="A/B/C=458-484"/>
</dbReference>
<dbReference type="PDB" id="7QUS">
    <property type="method" value="EM"/>
    <property type="resolution" value="2.39 A"/>
    <property type="chains" value="A/B/C=458-484"/>
</dbReference>
<dbReference type="PDB" id="7Z6V">
    <property type="method" value="EM"/>
    <property type="resolution" value="3.10 A"/>
    <property type="chains" value="A/B/C=458-485"/>
</dbReference>
<dbReference type="PDB" id="7Z7X">
    <property type="method" value="EM"/>
    <property type="resolution" value="3.30 A"/>
    <property type="chains" value="A/B/C=458-485"/>
</dbReference>
<dbReference type="PDB" id="7Z85">
    <property type="method" value="EM"/>
    <property type="resolution" value="3.10 A"/>
    <property type="chains" value="A/B/C=458-485"/>
</dbReference>
<dbReference type="PDB" id="7Z86">
    <property type="method" value="EM"/>
    <property type="resolution" value="3.40 A"/>
    <property type="chains" value="A/B/C=458-485"/>
</dbReference>
<dbReference type="PDB" id="7Z9Q">
    <property type="method" value="EM"/>
    <property type="resolution" value="3.60 A"/>
    <property type="chains" value="A/B/C=458-485"/>
</dbReference>
<dbReference type="PDB" id="7Z9R">
    <property type="method" value="EM"/>
    <property type="resolution" value="4.20 A"/>
    <property type="chains" value="A/B/C=458-485"/>
</dbReference>
<dbReference type="PDB" id="7ZCE">
    <property type="method" value="EM"/>
    <property type="resolution" value="3.50 A"/>
    <property type="chains" value="A/B/C=458-484"/>
</dbReference>
<dbReference type="PDB" id="7ZCF">
    <property type="method" value="EM"/>
    <property type="resolution" value="4.00 A"/>
    <property type="chains" value="C=458-484"/>
</dbReference>
<dbReference type="PDB" id="7ZH1">
    <property type="method" value="EM"/>
    <property type="resolution" value="2.48 A"/>
    <property type="chains" value="A/B/C=458-484"/>
</dbReference>
<dbReference type="PDB" id="7ZH2">
    <property type="method" value="EM"/>
    <property type="resolution" value="2.71 A"/>
    <property type="chains" value="A/B/C=458-484"/>
</dbReference>
<dbReference type="PDB" id="7ZH5">
    <property type="method" value="EM"/>
    <property type="resolution" value="3.30 A"/>
    <property type="chains" value="A/B/C=458-484"/>
</dbReference>
<dbReference type="PDB" id="7ZJ6">
    <property type="method" value="EM"/>
    <property type="resolution" value="2.60 A"/>
    <property type="chains" value="A/B/C=458-484"/>
</dbReference>
<dbReference type="PDB" id="7ZJ7">
    <property type="method" value="EM"/>
    <property type="resolution" value="3.95 A"/>
    <property type="chains" value="A/B/C=459-484"/>
</dbReference>
<dbReference type="PDB" id="7ZJ8">
    <property type="method" value="EM"/>
    <property type="resolution" value="3.10 A"/>
    <property type="chains" value="A/B/C=458-484"/>
</dbReference>
<dbReference type="PDB" id="7ZR7">
    <property type="method" value="EM"/>
    <property type="resolution" value="3.70 A"/>
    <property type="chains" value="A/B/C=458-484"/>
</dbReference>
<dbReference type="PDB" id="7ZR8">
    <property type="method" value="EM"/>
    <property type="resolution" value="3.70 A"/>
    <property type="chains" value="A=458-484"/>
</dbReference>
<dbReference type="PDB" id="7ZR9">
    <property type="method" value="EM"/>
    <property type="resolution" value="4.00 A"/>
    <property type="chains" value="A/B/C=458-484"/>
</dbReference>
<dbReference type="PDB" id="7ZRC">
    <property type="method" value="EM"/>
    <property type="resolution" value="3.50 A"/>
    <property type="chains" value="A/B/C=458-484"/>
</dbReference>
<dbReference type="PDB" id="8AJA">
    <property type="method" value="EM"/>
    <property type="resolution" value="2.59 A"/>
    <property type="chains" value="A/B/C=458-484"/>
</dbReference>
<dbReference type="PDB" id="8AJL">
    <property type="method" value="EM"/>
    <property type="resolution" value="2.77 A"/>
    <property type="chains" value="A/B/C=458-484"/>
</dbReference>
<dbReference type="PDB" id="8AQS">
    <property type="method" value="EM"/>
    <property type="resolution" value="2.92 A"/>
    <property type="chains" value="A=458-484"/>
</dbReference>
<dbReference type="PDB" id="8AQT">
    <property type="method" value="EM"/>
    <property type="resolution" value="4.40 A"/>
    <property type="chains" value="B=460-484"/>
</dbReference>
<dbReference type="PDB" id="8AQU">
    <property type="method" value="EM"/>
    <property type="resolution" value="3.22 A"/>
    <property type="chains" value="B=458-484"/>
</dbReference>
<dbReference type="PDB" id="8AQV">
    <property type="method" value="EM"/>
    <property type="resolution" value="2.96 A"/>
    <property type="chains" value="B=460-484"/>
</dbReference>
<dbReference type="PDB" id="8AQW">
    <property type="method" value="EM"/>
    <property type="resolution" value="3.30 A"/>
    <property type="chains" value="B=460-484"/>
</dbReference>
<dbReference type="PDB" id="8BON">
    <property type="method" value="EM"/>
    <property type="resolution" value="3.20 A"/>
    <property type="chains" value="A/B/C=458-484"/>
</dbReference>
<dbReference type="PDB" id="8CIM">
    <property type="method" value="EM"/>
    <property type="resolution" value="3.00 A"/>
    <property type="chains" value="A/B/C=458-484"/>
</dbReference>
<dbReference type="PDB" id="8F6X">
    <property type="method" value="EM"/>
    <property type="resolution" value="3.25 A"/>
    <property type="chains" value="A/B/C=459-484"/>
</dbReference>
<dbReference type="PDB" id="8H3D">
    <property type="method" value="EM"/>
    <property type="resolution" value="3.27 A"/>
    <property type="chains" value="A/B/C=458-485"/>
</dbReference>
<dbReference type="PDB" id="8H3E">
    <property type="method" value="EM"/>
    <property type="resolution" value="3.06 A"/>
    <property type="chains" value="A/B/C=458-485"/>
</dbReference>
<dbReference type="PDB" id="8KG5">
    <property type="method" value="EM"/>
    <property type="resolution" value="3.17 A"/>
    <property type="chains" value="A/B/C=458-485"/>
</dbReference>
<dbReference type="PDB" id="8OYT">
    <property type="method" value="EM"/>
    <property type="resolution" value="3.80 A"/>
    <property type="chains" value="A/B/C=458-484"/>
</dbReference>
<dbReference type="PDB" id="8OYU">
    <property type="method" value="EM"/>
    <property type="resolution" value="4.00 A"/>
    <property type="chains" value="A/B/C=458-484"/>
</dbReference>
<dbReference type="PDB" id="8QPR">
    <property type="method" value="EM"/>
    <property type="resolution" value="3.80 A"/>
    <property type="chains" value="A=458-484"/>
</dbReference>
<dbReference type="PDB" id="8QQ0">
    <property type="method" value="EM"/>
    <property type="resolution" value="3.50 A"/>
    <property type="chains" value="A=458-484"/>
</dbReference>
<dbReference type="PDB" id="8QTD">
    <property type="method" value="EM"/>
    <property type="resolution" value="3.60 A"/>
    <property type="chains" value="A=458-484"/>
</dbReference>
<dbReference type="PDB" id="8R1C">
    <property type="method" value="EM"/>
    <property type="resolution" value="2.20 A"/>
    <property type="chains" value="A/B/C=458-484"/>
</dbReference>
<dbReference type="PDB" id="8R1D">
    <property type="method" value="EM"/>
    <property type="resolution" value="2.37 A"/>
    <property type="chains" value="A/B/C=458-484"/>
</dbReference>
<dbReference type="PDB" id="8R87">
    <property type="method" value="EM"/>
    <property type="resolution" value="3.00 A"/>
    <property type="chains" value="A/B/C=458-484"/>
</dbReference>
<dbReference type="PDB" id="8R8K">
    <property type="method" value="EM"/>
    <property type="resolution" value="3.41 A"/>
    <property type="chains" value="A=458-484"/>
</dbReference>
<dbReference type="PDB" id="8ULJ">
    <property type="method" value="X-ray"/>
    <property type="resolution" value="3.00 A"/>
    <property type="chains" value="B=458-484"/>
</dbReference>
<dbReference type="PDB" id="8ULK">
    <property type="method" value="X-ray"/>
    <property type="resolution" value="4.28 A"/>
    <property type="chains" value="I/J/K=458-484"/>
</dbReference>
<dbReference type="PDB" id="8V5V">
    <property type="method" value="EM"/>
    <property type="resolution" value="2.93 A"/>
    <property type="chains" value="E/F/G=458-484"/>
</dbReference>
<dbReference type="PDB" id="8YZB">
    <property type="method" value="EM"/>
    <property type="resolution" value="3.29 A"/>
    <property type="chains" value="A=458-485"/>
</dbReference>
<dbReference type="PDB" id="8YZC">
    <property type="method" value="EM"/>
    <property type="resolution" value="2.70 A"/>
    <property type="chains" value="A/B/C=458-485"/>
</dbReference>
<dbReference type="PDB" id="8YZD">
    <property type="method" value="EM"/>
    <property type="resolution" value="3.07 A"/>
    <property type="chains" value="A=458-485"/>
</dbReference>
<dbReference type="PDB" id="8YZE">
    <property type="method" value="EM"/>
    <property type="resolution" value="3.06 A"/>
    <property type="chains" value="A/B/C=458-485"/>
</dbReference>
<dbReference type="PDB" id="8Z6Q">
    <property type="method" value="EM"/>
    <property type="resolution" value="5.41 A"/>
    <property type="chains" value="A/B/C/J/K/L=458-485"/>
</dbReference>
<dbReference type="PDB" id="8Z6R">
    <property type="method" value="EM"/>
    <property type="resolution" value="2.87 A"/>
    <property type="chains" value="A/B/C=458-485"/>
</dbReference>
<dbReference type="PDB" id="8Z6S">
    <property type="method" value="EM"/>
    <property type="resolution" value="2.84 A"/>
    <property type="chains" value="A/B/C=458-485"/>
</dbReference>
<dbReference type="PDB" id="8Z6T">
    <property type="method" value="EM"/>
    <property type="resolution" value="2.92 A"/>
    <property type="chains" value="A=458-485"/>
</dbReference>
<dbReference type="PDB" id="8Z6U">
    <property type="method" value="EM"/>
    <property type="resolution" value="3.83 A"/>
    <property type="chains" value="A/B/C/D/E/F=458-485"/>
</dbReference>
<dbReference type="PDB" id="8Z6W">
    <property type="method" value="EM"/>
    <property type="resolution" value="3.04 A"/>
    <property type="chains" value="A/B/C=458-485"/>
</dbReference>
<dbReference type="PDB" id="8Z6X">
    <property type="method" value="EM"/>
    <property type="resolution" value="2.96 A"/>
    <property type="chains" value="A=458-485"/>
</dbReference>
<dbReference type="PDB" id="8ZPP">
    <property type="method" value="EM"/>
    <property type="resolution" value="3.60 A"/>
    <property type="chains" value="A=458-484"/>
</dbReference>
<dbReference type="PDB" id="9F9Y">
    <property type="method" value="EM"/>
    <property type="resolution" value="2.80 A"/>
    <property type="chains" value="A/B/C=458-484"/>
</dbReference>
<dbReference type="PDB" id="9FGS">
    <property type="method" value="EM"/>
    <property type="resolution" value="4.00 A"/>
    <property type="chains" value="C=458-484"/>
</dbReference>
<dbReference type="PDB" id="9FGT">
    <property type="method" value="EM"/>
    <property type="resolution" value="3.80 A"/>
    <property type="chains" value="C=458-484"/>
</dbReference>
<dbReference type="PDB" id="9FGU">
    <property type="method" value="EM"/>
    <property type="resolution" value="4.30 A"/>
    <property type="chains" value="C=458-484"/>
</dbReference>
<dbReference type="PDB" id="9FJK">
    <property type="method" value="EM"/>
    <property type="resolution" value="2.84 A"/>
    <property type="chains" value="A/B/C=458-484"/>
</dbReference>
<dbReference type="PDB" id="9GDX">
    <property type="method" value="EM"/>
    <property type="resolution" value="2.80 A"/>
    <property type="chains" value="A/B/C=458-484"/>
</dbReference>
<dbReference type="PDB" id="9GDY">
    <property type="method" value="EM"/>
    <property type="resolution" value="2.80 A"/>
    <property type="chains" value="A/B/C=458-484"/>
</dbReference>
<dbReference type="PDB" id="9KT3">
    <property type="method" value="EM"/>
    <property type="resolution" value="3.63 A"/>
    <property type="chains" value="A/B/C=458-485"/>
</dbReference>
<dbReference type="PDBsum" id="1AA0"/>
<dbReference type="PDBsum" id="1AVY"/>
<dbReference type="PDBsum" id="1OX3"/>
<dbReference type="PDBsum" id="1RFO"/>
<dbReference type="PDBsum" id="1V1H"/>
<dbReference type="PDBsum" id="1V1I"/>
<dbReference type="PDBsum" id="2BSG"/>
<dbReference type="PDBsum" id="2IBL"/>
<dbReference type="PDBsum" id="2KBL"/>
<dbReference type="PDBsum" id="3A1M"/>
<dbReference type="PDBsum" id="3J2O"/>
<dbReference type="PDBsum" id="4MMQ"/>
<dbReference type="PDBsum" id="4MMR"/>
<dbReference type="PDBsum" id="4MMS"/>
<dbReference type="PDBsum" id="4MMT"/>
<dbReference type="PDBsum" id="4MMU"/>
<dbReference type="PDBsum" id="4MMV"/>
<dbReference type="PDBsum" id="4NCU"/>
<dbReference type="PDBsum" id="4NCV"/>
<dbReference type="PDBsum" id="4NCW"/>
<dbReference type="PDBsum" id="5TDL"/>
<dbReference type="PDBsum" id="6APD"/>
<dbReference type="PDBsum" id="6CNV"/>
<dbReference type="PDBsum" id="6CRV"/>
<dbReference type="PDBsum" id="6CRW"/>
<dbReference type="PDBsum" id="6CRX"/>
<dbReference type="PDBsum" id="6CRZ"/>
<dbReference type="PDBsum" id="6CS0"/>
<dbReference type="PDBsum" id="6CS1"/>
<dbReference type="PDBsum" id="6CS2"/>
<dbReference type="PDBsum" id="6JX7"/>
<dbReference type="PDBsum" id="6OE5"/>
<dbReference type="PDBsum" id="6Z97"/>
<dbReference type="PDBsum" id="6ZGH"/>
<dbReference type="PDBsum" id="6ZHD"/>
<dbReference type="PDBsum" id="7A4N"/>
<dbReference type="PDBsum" id="7L7F"/>
<dbReference type="PDBsum" id="7NS6"/>
<dbReference type="PDBsum" id="7QDG"/>
<dbReference type="PDBsum" id="7QDH"/>
<dbReference type="PDBsum" id="7QUR"/>
<dbReference type="PDBsum" id="7QUS"/>
<dbReference type="PDBsum" id="7Z6V"/>
<dbReference type="PDBsum" id="7Z7X"/>
<dbReference type="PDBsum" id="7Z85"/>
<dbReference type="PDBsum" id="7Z86"/>
<dbReference type="PDBsum" id="7Z9Q"/>
<dbReference type="PDBsum" id="7Z9R"/>
<dbReference type="PDBsum" id="7ZCE"/>
<dbReference type="PDBsum" id="7ZCF"/>
<dbReference type="PDBsum" id="7ZH1"/>
<dbReference type="PDBsum" id="7ZH2"/>
<dbReference type="PDBsum" id="7ZH5"/>
<dbReference type="PDBsum" id="7ZJ6"/>
<dbReference type="PDBsum" id="7ZJ7"/>
<dbReference type="PDBsum" id="7ZJ8"/>
<dbReference type="PDBsum" id="7ZR7"/>
<dbReference type="PDBsum" id="7ZR8"/>
<dbReference type="PDBsum" id="7ZR9"/>
<dbReference type="PDBsum" id="7ZRC"/>
<dbReference type="PDBsum" id="8AJA"/>
<dbReference type="PDBsum" id="8AJL"/>
<dbReference type="PDBsum" id="8AQS"/>
<dbReference type="PDBsum" id="8AQT"/>
<dbReference type="PDBsum" id="8AQU"/>
<dbReference type="PDBsum" id="8AQV"/>
<dbReference type="PDBsum" id="8AQW"/>
<dbReference type="PDBsum" id="8BON"/>
<dbReference type="PDBsum" id="8CIM"/>
<dbReference type="PDBsum" id="8F6X"/>
<dbReference type="PDBsum" id="8H3D"/>
<dbReference type="PDBsum" id="8H3E"/>
<dbReference type="PDBsum" id="8KG5"/>
<dbReference type="PDBsum" id="8OYT"/>
<dbReference type="PDBsum" id="8OYU"/>
<dbReference type="PDBsum" id="8QPR"/>
<dbReference type="PDBsum" id="8QQ0"/>
<dbReference type="PDBsum" id="8QTD"/>
<dbReference type="PDBsum" id="8R1C"/>
<dbReference type="PDBsum" id="8R1D"/>
<dbReference type="PDBsum" id="8R87"/>
<dbReference type="PDBsum" id="8R8K"/>
<dbReference type="PDBsum" id="8ULJ"/>
<dbReference type="PDBsum" id="8ULK"/>
<dbReference type="PDBsum" id="8V5V"/>
<dbReference type="PDBsum" id="8YZB"/>
<dbReference type="PDBsum" id="8YZC"/>
<dbReference type="PDBsum" id="8YZD"/>
<dbReference type="PDBsum" id="8YZE"/>
<dbReference type="PDBsum" id="8Z6Q"/>
<dbReference type="PDBsum" id="8Z6R"/>
<dbReference type="PDBsum" id="8Z6S"/>
<dbReference type="PDBsum" id="8Z6T"/>
<dbReference type="PDBsum" id="8Z6U"/>
<dbReference type="PDBsum" id="8Z6W"/>
<dbReference type="PDBsum" id="8Z6X"/>
<dbReference type="PDBsum" id="8ZPP"/>
<dbReference type="PDBsum" id="9F9Y"/>
<dbReference type="PDBsum" id="9FGS"/>
<dbReference type="PDBsum" id="9FGT"/>
<dbReference type="PDBsum" id="9FGU"/>
<dbReference type="PDBsum" id="9FJK"/>
<dbReference type="PDBsum" id="9GDX"/>
<dbReference type="PDBsum" id="9GDY"/>
<dbReference type="PDBsum" id="9KT3"/>
<dbReference type="EMDB" id="EMD-11119"/>
<dbReference type="EMDB" id="EMD-11218"/>
<dbReference type="EMDB" id="EMD-11639"/>
<dbReference type="EMDB" id="EMD-12561"/>
<dbReference type="EMDB" id="EMD-13916"/>
<dbReference type="EMDB" id="EMD-13919"/>
<dbReference type="EMDB" id="EMD-14152"/>
<dbReference type="EMDB" id="EMD-14153"/>
<dbReference type="EMDB" id="EMD-14531"/>
<dbReference type="EMDB" id="EMD-14539"/>
<dbReference type="EMDB" id="EMD-14543"/>
<dbReference type="EMDB" id="EMD-14544"/>
<dbReference type="EMDB" id="EMD-14575"/>
<dbReference type="EMDB" id="EMD-14576"/>
<dbReference type="EMDB" id="EMD-14628"/>
<dbReference type="EMDB" id="EMD-14629"/>
<dbReference type="EMDB" id="EMD-14717"/>
<dbReference type="EMDB" id="EMD-14718"/>
<dbReference type="EMDB" id="EMD-14724"/>
<dbReference type="EMDB" id="EMD-14742"/>
<dbReference type="EMDB" id="EMD-14743"/>
<dbReference type="EMDB" id="EMD-14744"/>
<dbReference type="EMDB" id="EMD-14885"/>
<dbReference type="EMDB" id="EMD-14886"/>
<dbReference type="EMDB" id="EMD-14887"/>
<dbReference type="EMDB" id="EMD-14910"/>
<dbReference type="EMDB" id="EMD-15475"/>
<dbReference type="EMDB" id="EMD-15482"/>
<dbReference type="EMDB" id="EMD-15588"/>
<dbReference type="EMDB" id="EMD-15589"/>
<dbReference type="EMDB" id="EMD-15590"/>
<dbReference type="EMDB" id="EMD-15591"/>
<dbReference type="EMDB" id="EMD-15592"/>
<dbReference type="EMDB" id="EMD-16678"/>
<dbReference type="EMDB" id="EMD-17295"/>
<dbReference type="EMDB" id="EMD-17296"/>
<dbReference type="EMDB" id="EMD-18560"/>
<dbReference type="EMDB" id="EMD-18571"/>
<dbReference type="EMDB" id="EMD-18649"/>
<dbReference type="EMDB" id="EMD-18807"/>
<dbReference type="EMDB" id="EMD-18808"/>
<dbReference type="EMDB" id="EMD-18997"/>
<dbReference type="EMDB" id="EMD-19002"/>
<dbReference type="EMDB" id="EMD-34464"/>
<dbReference type="EMDB" id="EMD-34465"/>
<dbReference type="EMDB" id="EMD-37210"/>
<dbReference type="EMDB" id="EMD-39688"/>
<dbReference type="EMDB" id="EMD-39689"/>
<dbReference type="EMDB" id="EMD-39690"/>
<dbReference type="EMDB" id="EMD-39691"/>
<dbReference type="EMDB" id="EMD-39801"/>
<dbReference type="EMDB" id="EMD-39802"/>
<dbReference type="EMDB" id="EMD-39803"/>
<dbReference type="EMDB" id="EMD-39804"/>
<dbReference type="EMDB" id="EMD-39805"/>
<dbReference type="EMDB" id="EMD-39806"/>
<dbReference type="EMDB" id="EMD-39807"/>
<dbReference type="EMDB" id="EMD-42985"/>
<dbReference type="EMDB" id="EMD-50263"/>
<dbReference type="EMDB" id="EMD-50420"/>
<dbReference type="EMDB" id="EMD-50424"/>
<dbReference type="EMDB" id="EMD-50428"/>
<dbReference type="EMDB" id="EMD-50503"/>
<dbReference type="EMDB" id="EMD-51279"/>
<dbReference type="EMDB" id="EMD-51280"/>
<dbReference type="EMDB" id="EMD-60351"/>
<dbReference type="EMDB" id="EMD-62556"/>
<dbReference type="EMDB" id="EMD-8069"/>
<dbReference type="SMR" id="P10104"/>
<dbReference type="GeneID" id="1258630"/>
<dbReference type="KEGG" id="vg:1258630"/>
<dbReference type="OrthoDB" id="1450at10239"/>
<dbReference type="EvolutionaryTrace" id="P10104"/>
<dbReference type="Proteomes" id="UP000009087">
    <property type="component" value="Segment"/>
</dbReference>
<dbReference type="GO" id="GO:0044423">
    <property type="term" value="C:virion component"/>
    <property type="evidence" value="ECO:0007669"/>
    <property type="project" value="UniProtKB-KW"/>
</dbReference>
<dbReference type="FunFam" id="1.20.5.320:FF:000014">
    <property type="entry name" value="Fibritin"/>
    <property type="match status" value="1"/>
</dbReference>
<dbReference type="Gene3D" id="1.20.5.320">
    <property type="entry name" value="6-Phosphogluconate Dehydrogenase, domain 3"/>
    <property type="match status" value="2"/>
</dbReference>
<dbReference type="InterPro" id="IPR012473">
    <property type="entry name" value="Fibritin_C"/>
</dbReference>
<dbReference type="Pfam" id="PF07921">
    <property type="entry name" value="Fibritin_C"/>
    <property type="match status" value="1"/>
</dbReference>
<dbReference type="PRINTS" id="PR01880">
    <property type="entry name" value="FIBRITIN"/>
</dbReference>
<dbReference type="SUPFAM" id="SSF58046">
    <property type="entry name" value="Fibritin"/>
    <property type="match status" value="2"/>
</dbReference>
<sequence length="487" mass="51872">MTDIVLNDLPFVDGPPAEGQSRISWIKNGEEILGADTQYGSEGSMNRPTVSVLRNVEVLDKNIGILKTSLETANSDIKTIQGILDVSGDIEALAQIGINKKDISDLKTLTSEHTEILNGTNNTVDSILADIGPFNAEANSVYRTIRNDLLWIKRELGQYTGQDINGLPVVGNPSSGMKHRIINNTDVITSQGIRLSELETKFIESDVGSLTIEVGNLREELGPKPPSFSQNVYSRLNEIDTKQTTVESDISAIKTSIGYPGNNSIITSVNTNTDNIASINLELNQSGGIKQRLTVIETSIGSDDIPSSIKGQIKDNTTSIESLNGIVGENTSSGLRANVSWLNQIVGTDSSGGQPSPPGSLLNRVSTIETSVSGLNNAVQNLQVEIGNNSAGIKGQVVALNTLVNGTNPNGSTVEERGLTNSIKANETNIASVTQEVNTAKGNISSLQGDVQALQEAGYIPEAPRDGQAYVRKDGEWVFLSTFLSPA</sequence>